<accession>Q98M55</accession>
<organism>
    <name type="scientific">Mesorhizobium japonicum (strain LMG 29417 / CECT 9101 / MAFF 303099)</name>
    <name type="common">Mesorhizobium loti (strain MAFF 303099)</name>
    <dbReference type="NCBI Taxonomy" id="266835"/>
    <lineage>
        <taxon>Bacteria</taxon>
        <taxon>Pseudomonadati</taxon>
        <taxon>Pseudomonadota</taxon>
        <taxon>Alphaproteobacteria</taxon>
        <taxon>Hyphomicrobiales</taxon>
        <taxon>Phyllobacteriaceae</taxon>
        <taxon>Mesorhizobium</taxon>
    </lineage>
</organism>
<evidence type="ECO:0000255" key="1">
    <source>
        <dbReference type="HAMAP-Rule" id="MF_00113"/>
    </source>
</evidence>
<protein>
    <recommendedName>
        <fullName evidence="1">S-adenosylmethionine:tRNA ribosyltransferase-isomerase</fullName>
        <ecNumber evidence="1">2.4.99.17</ecNumber>
    </recommendedName>
    <alternativeName>
        <fullName evidence="1">Queuosine biosynthesis protein QueA</fullName>
    </alternativeName>
</protein>
<gene>
    <name evidence="1" type="primary">queA</name>
    <name type="ordered locus">mll0724</name>
</gene>
<dbReference type="EC" id="2.4.99.17" evidence="1"/>
<dbReference type="EMBL" id="BA000012">
    <property type="protein sequence ID" value="BAB48258.1"/>
    <property type="molecule type" value="Genomic_DNA"/>
</dbReference>
<dbReference type="RefSeq" id="WP_010909613.1">
    <property type="nucleotide sequence ID" value="NC_002678.2"/>
</dbReference>
<dbReference type="SMR" id="Q98M55"/>
<dbReference type="KEGG" id="mlo:mll0724"/>
<dbReference type="PATRIC" id="fig|266835.9.peg.582"/>
<dbReference type="eggNOG" id="COG0809">
    <property type="taxonomic scope" value="Bacteria"/>
</dbReference>
<dbReference type="HOGENOM" id="CLU_039110_1_1_5"/>
<dbReference type="UniPathway" id="UPA00392"/>
<dbReference type="Proteomes" id="UP000000552">
    <property type="component" value="Chromosome"/>
</dbReference>
<dbReference type="GO" id="GO:0005737">
    <property type="term" value="C:cytoplasm"/>
    <property type="evidence" value="ECO:0007669"/>
    <property type="project" value="UniProtKB-SubCell"/>
</dbReference>
<dbReference type="GO" id="GO:0051075">
    <property type="term" value="F:S-adenosylmethionine:tRNA ribosyltransferase-isomerase activity"/>
    <property type="evidence" value="ECO:0007669"/>
    <property type="project" value="UniProtKB-EC"/>
</dbReference>
<dbReference type="GO" id="GO:0008616">
    <property type="term" value="P:queuosine biosynthetic process"/>
    <property type="evidence" value="ECO:0007669"/>
    <property type="project" value="UniProtKB-UniRule"/>
</dbReference>
<dbReference type="GO" id="GO:0002099">
    <property type="term" value="P:tRNA wobble guanine modification"/>
    <property type="evidence" value="ECO:0007669"/>
    <property type="project" value="TreeGrafter"/>
</dbReference>
<dbReference type="FunFam" id="3.40.1780.10:FF:000001">
    <property type="entry name" value="S-adenosylmethionine:tRNA ribosyltransferase-isomerase"/>
    <property type="match status" value="1"/>
</dbReference>
<dbReference type="Gene3D" id="2.40.10.240">
    <property type="entry name" value="QueA-like"/>
    <property type="match status" value="1"/>
</dbReference>
<dbReference type="Gene3D" id="3.40.1780.10">
    <property type="entry name" value="QueA-like"/>
    <property type="match status" value="1"/>
</dbReference>
<dbReference type="HAMAP" id="MF_00113">
    <property type="entry name" value="QueA"/>
    <property type="match status" value="1"/>
</dbReference>
<dbReference type="InterPro" id="IPR003699">
    <property type="entry name" value="QueA"/>
</dbReference>
<dbReference type="InterPro" id="IPR042118">
    <property type="entry name" value="QueA_dom1"/>
</dbReference>
<dbReference type="InterPro" id="IPR042119">
    <property type="entry name" value="QueA_dom2"/>
</dbReference>
<dbReference type="InterPro" id="IPR036100">
    <property type="entry name" value="QueA_sf"/>
</dbReference>
<dbReference type="NCBIfam" id="NF001140">
    <property type="entry name" value="PRK00147.1"/>
    <property type="match status" value="1"/>
</dbReference>
<dbReference type="NCBIfam" id="TIGR00113">
    <property type="entry name" value="queA"/>
    <property type="match status" value="1"/>
</dbReference>
<dbReference type="PANTHER" id="PTHR30307">
    <property type="entry name" value="S-ADENOSYLMETHIONINE:TRNA RIBOSYLTRANSFERASE-ISOMERASE"/>
    <property type="match status" value="1"/>
</dbReference>
<dbReference type="PANTHER" id="PTHR30307:SF0">
    <property type="entry name" value="S-ADENOSYLMETHIONINE:TRNA RIBOSYLTRANSFERASE-ISOMERASE"/>
    <property type="match status" value="1"/>
</dbReference>
<dbReference type="Pfam" id="PF02547">
    <property type="entry name" value="Queuosine_synth"/>
    <property type="match status" value="1"/>
</dbReference>
<dbReference type="SUPFAM" id="SSF111337">
    <property type="entry name" value="QueA-like"/>
    <property type="match status" value="1"/>
</dbReference>
<reference key="1">
    <citation type="journal article" date="2000" name="DNA Res.">
        <title>Complete genome structure of the nitrogen-fixing symbiotic bacterium Mesorhizobium loti.</title>
        <authorList>
            <person name="Kaneko T."/>
            <person name="Nakamura Y."/>
            <person name="Sato S."/>
            <person name="Asamizu E."/>
            <person name="Kato T."/>
            <person name="Sasamoto S."/>
            <person name="Watanabe A."/>
            <person name="Idesawa K."/>
            <person name="Ishikawa A."/>
            <person name="Kawashima K."/>
            <person name="Kimura T."/>
            <person name="Kishida Y."/>
            <person name="Kiyokawa C."/>
            <person name="Kohara M."/>
            <person name="Matsumoto M."/>
            <person name="Matsuno A."/>
            <person name="Mochizuki Y."/>
            <person name="Nakayama S."/>
            <person name="Nakazaki N."/>
            <person name="Shimpo S."/>
            <person name="Sugimoto M."/>
            <person name="Takeuchi C."/>
            <person name="Yamada M."/>
            <person name="Tabata S."/>
        </authorList>
    </citation>
    <scope>NUCLEOTIDE SEQUENCE [LARGE SCALE GENOMIC DNA]</scope>
    <source>
        <strain>LMG 29417 / CECT 9101 / MAFF 303099</strain>
    </source>
</reference>
<feature type="chain" id="PRO_0000165430" description="S-adenosylmethionine:tRNA ribosyltransferase-isomerase">
    <location>
        <begin position="1"/>
        <end position="361"/>
    </location>
</feature>
<sequence length="361" mass="39380">MRVDLFDFELPEERIALRPAEPRDSAKMLVVKSGEALDDRKVGDLPSLLRAGDVLVFNDTKVIPAQLKGIRRRGEAQAQVEATLHMRVAPDRWLAFMRPGKRIAAGDRIHFGHDGNSCFLGQLDATVIEKGEGGEALLGFDLSGPFLDEALHAVGHIPLPPYIASKRDDDERDRADYQTIYAREEGAVAAPTAGLHFTPELFAALDAKGVERHFVTLHVGAGTFLPVKADDTADHKMHAEIGSVSRETADALNAAKARGGRIIAVGTTSLRLLESAAREDGTVPAWSGPTDIFITPGYRFRTADMLMTNFHLPRSTLFMLVSAFSGLDTMGAAYAHAIANRYRFYSYGDASLLYRAEMSDG</sequence>
<comment type="function">
    <text evidence="1">Transfers and isomerizes the ribose moiety from AdoMet to the 7-aminomethyl group of 7-deazaguanine (preQ1-tRNA) to give epoxyqueuosine (oQ-tRNA).</text>
</comment>
<comment type="catalytic activity">
    <reaction evidence="1">
        <text>7-aminomethyl-7-carbaguanosine(34) in tRNA + S-adenosyl-L-methionine = epoxyqueuosine(34) in tRNA + adenine + L-methionine + 2 H(+)</text>
        <dbReference type="Rhea" id="RHEA:32155"/>
        <dbReference type="Rhea" id="RHEA-COMP:10342"/>
        <dbReference type="Rhea" id="RHEA-COMP:18582"/>
        <dbReference type="ChEBI" id="CHEBI:15378"/>
        <dbReference type="ChEBI" id="CHEBI:16708"/>
        <dbReference type="ChEBI" id="CHEBI:57844"/>
        <dbReference type="ChEBI" id="CHEBI:59789"/>
        <dbReference type="ChEBI" id="CHEBI:82833"/>
        <dbReference type="ChEBI" id="CHEBI:194443"/>
        <dbReference type="EC" id="2.4.99.17"/>
    </reaction>
</comment>
<comment type="pathway">
    <text evidence="1">tRNA modification; tRNA-queuosine biosynthesis.</text>
</comment>
<comment type="subunit">
    <text evidence="1">Monomer.</text>
</comment>
<comment type="subcellular location">
    <subcellularLocation>
        <location evidence="1">Cytoplasm</location>
    </subcellularLocation>
</comment>
<comment type="similarity">
    <text evidence="1">Belongs to the QueA family.</text>
</comment>
<keyword id="KW-0963">Cytoplasm</keyword>
<keyword id="KW-0671">Queuosine biosynthesis</keyword>
<keyword id="KW-0949">S-adenosyl-L-methionine</keyword>
<keyword id="KW-0808">Transferase</keyword>
<name>QUEA_RHILO</name>
<proteinExistence type="inferred from homology"/>